<proteinExistence type="inferred from homology"/>
<keyword id="KW-0963">Cytoplasm</keyword>
<keyword id="KW-0489">Methyltransferase</keyword>
<keyword id="KW-0949">S-adenosyl-L-methionine</keyword>
<keyword id="KW-0808">Transferase</keyword>
<keyword id="KW-0819">tRNA processing</keyword>
<evidence type="ECO:0000255" key="1">
    <source>
        <dbReference type="HAMAP-Rule" id="MF_00605"/>
    </source>
</evidence>
<reference key="1">
    <citation type="submission" date="2008-05" db="EMBL/GenBank/DDBJ databases">
        <title>Complete genome sequence of Clostridium botulinum E3 str. Alaska E43.</title>
        <authorList>
            <person name="Brinkac L.M."/>
            <person name="Brown J.L."/>
            <person name="Bruce D."/>
            <person name="Detter C."/>
            <person name="Munk C."/>
            <person name="Smith L.A."/>
            <person name="Smith T.J."/>
            <person name="Sutton G."/>
            <person name="Brettin T.S."/>
        </authorList>
    </citation>
    <scope>NUCLEOTIDE SEQUENCE [LARGE SCALE GENOMIC DNA]</scope>
    <source>
        <strain>Alaska E43 / Type E3</strain>
    </source>
</reference>
<feature type="chain" id="PRO_1000130150" description="tRNA (guanine-N(1)-)-methyltransferase">
    <location>
        <begin position="1"/>
        <end position="238"/>
    </location>
</feature>
<feature type="binding site" evidence="1">
    <location>
        <position position="110"/>
    </location>
    <ligand>
        <name>S-adenosyl-L-methionine</name>
        <dbReference type="ChEBI" id="CHEBI:59789"/>
    </ligand>
</feature>
<feature type="binding site" evidence="1">
    <location>
        <begin position="129"/>
        <end position="134"/>
    </location>
    <ligand>
        <name>S-adenosyl-L-methionine</name>
        <dbReference type="ChEBI" id="CHEBI:59789"/>
    </ligand>
</feature>
<gene>
    <name evidence="1" type="primary">trmD</name>
    <name type="ordered locus">CLH_1200</name>
</gene>
<sequence length="238" mass="27372">MKISILTLFPEMFSIFNHSIIGRAQENKIIELEVLNIRDNTLDKHKKVDDYPYGGGAGMVMAPQPIVDTIRKAKENNKGKVVFLGPRGKTFNQKMAMDLSKEENLIFLCGHYEGIDQRVYKHIDMEVSLGDFILTGGEMAAIPVIDSILRLIPGVLGKEESFMDESFSEDLLEYPQYTRPYEFEGECVPEILLSGHHENIRKWRRLQSLNLTENRRPDLYKNVILTKEDKKLLGRKNK</sequence>
<protein>
    <recommendedName>
        <fullName evidence="1">tRNA (guanine-N(1)-)-methyltransferase</fullName>
        <ecNumber evidence="1">2.1.1.228</ecNumber>
    </recommendedName>
    <alternativeName>
        <fullName evidence="1">M1G-methyltransferase</fullName>
    </alternativeName>
    <alternativeName>
        <fullName evidence="1">tRNA [GM37] methyltransferase</fullName>
    </alternativeName>
</protein>
<name>TRMD_CLOBA</name>
<accession>B2V4E5</accession>
<organism>
    <name type="scientific">Clostridium botulinum (strain Alaska E43 / Type E3)</name>
    <dbReference type="NCBI Taxonomy" id="508767"/>
    <lineage>
        <taxon>Bacteria</taxon>
        <taxon>Bacillati</taxon>
        <taxon>Bacillota</taxon>
        <taxon>Clostridia</taxon>
        <taxon>Eubacteriales</taxon>
        <taxon>Clostridiaceae</taxon>
        <taxon>Clostridium</taxon>
    </lineage>
</organism>
<comment type="function">
    <text evidence="1">Specifically methylates guanosine-37 in various tRNAs.</text>
</comment>
<comment type="catalytic activity">
    <reaction evidence="1">
        <text>guanosine(37) in tRNA + S-adenosyl-L-methionine = N(1)-methylguanosine(37) in tRNA + S-adenosyl-L-homocysteine + H(+)</text>
        <dbReference type="Rhea" id="RHEA:36899"/>
        <dbReference type="Rhea" id="RHEA-COMP:10145"/>
        <dbReference type="Rhea" id="RHEA-COMP:10147"/>
        <dbReference type="ChEBI" id="CHEBI:15378"/>
        <dbReference type="ChEBI" id="CHEBI:57856"/>
        <dbReference type="ChEBI" id="CHEBI:59789"/>
        <dbReference type="ChEBI" id="CHEBI:73542"/>
        <dbReference type="ChEBI" id="CHEBI:74269"/>
        <dbReference type="EC" id="2.1.1.228"/>
    </reaction>
</comment>
<comment type="subunit">
    <text evidence="1">Homodimer.</text>
</comment>
<comment type="subcellular location">
    <subcellularLocation>
        <location evidence="1">Cytoplasm</location>
    </subcellularLocation>
</comment>
<comment type="similarity">
    <text evidence="1">Belongs to the RNA methyltransferase TrmD family.</text>
</comment>
<dbReference type="EC" id="2.1.1.228" evidence="1"/>
<dbReference type="EMBL" id="CP001078">
    <property type="protein sequence ID" value="ACD52613.1"/>
    <property type="molecule type" value="Genomic_DNA"/>
</dbReference>
<dbReference type="RefSeq" id="WP_003372749.1">
    <property type="nucleotide sequence ID" value="NC_010723.1"/>
</dbReference>
<dbReference type="SMR" id="B2V4E5"/>
<dbReference type="KEGG" id="cbt:CLH_1200"/>
<dbReference type="HOGENOM" id="CLU_047363_0_1_9"/>
<dbReference type="GO" id="GO:0005829">
    <property type="term" value="C:cytosol"/>
    <property type="evidence" value="ECO:0007669"/>
    <property type="project" value="TreeGrafter"/>
</dbReference>
<dbReference type="GO" id="GO:0052906">
    <property type="term" value="F:tRNA (guanine(37)-N1)-methyltransferase activity"/>
    <property type="evidence" value="ECO:0007669"/>
    <property type="project" value="UniProtKB-UniRule"/>
</dbReference>
<dbReference type="GO" id="GO:0002939">
    <property type="term" value="P:tRNA N1-guanine methylation"/>
    <property type="evidence" value="ECO:0007669"/>
    <property type="project" value="TreeGrafter"/>
</dbReference>
<dbReference type="CDD" id="cd18080">
    <property type="entry name" value="TrmD-like"/>
    <property type="match status" value="1"/>
</dbReference>
<dbReference type="FunFam" id="1.10.1270.20:FF:000001">
    <property type="entry name" value="tRNA (guanine-N(1)-)-methyltransferase"/>
    <property type="match status" value="1"/>
</dbReference>
<dbReference type="FunFam" id="3.40.1280.10:FF:000001">
    <property type="entry name" value="tRNA (guanine-N(1)-)-methyltransferase"/>
    <property type="match status" value="1"/>
</dbReference>
<dbReference type="Gene3D" id="3.40.1280.10">
    <property type="match status" value="1"/>
</dbReference>
<dbReference type="Gene3D" id="1.10.1270.20">
    <property type="entry name" value="tRNA(m1g37)methyltransferase, domain 2"/>
    <property type="match status" value="1"/>
</dbReference>
<dbReference type="HAMAP" id="MF_00605">
    <property type="entry name" value="TrmD"/>
    <property type="match status" value="1"/>
</dbReference>
<dbReference type="InterPro" id="IPR029028">
    <property type="entry name" value="Alpha/beta_knot_MTases"/>
</dbReference>
<dbReference type="InterPro" id="IPR023148">
    <property type="entry name" value="tRNA_m1G_MeTrfase_C_sf"/>
</dbReference>
<dbReference type="InterPro" id="IPR002649">
    <property type="entry name" value="tRNA_m1G_MeTrfase_TrmD"/>
</dbReference>
<dbReference type="InterPro" id="IPR029026">
    <property type="entry name" value="tRNA_m1G_MTases_N"/>
</dbReference>
<dbReference type="InterPro" id="IPR016009">
    <property type="entry name" value="tRNA_MeTrfase_TRMD/TRM10"/>
</dbReference>
<dbReference type="NCBIfam" id="NF000648">
    <property type="entry name" value="PRK00026.1"/>
    <property type="match status" value="1"/>
</dbReference>
<dbReference type="NCBIfam" id="TIGR00088">
    <property type="entry name" value="trmD"/>
    <property type="match status" value="1"/>
</dbReference>
<dbReference type="PANTHER" id="PTHR46417">
    <property type="entry name" value="TRNA (GUANINE-N(1)-)-METHYLTRANSFERASE"/>
    <property type="match status" value="1"/>
</dbReference>
<dbReference type="PANTHER" id="PTHR46417:SF1">
    <property type="entry name" value="TRNA (GUANINE-N(1)-)-METHYLTRANSFERASE"/>
    <property type="match status" value="1"/>
</dbReference>
<dbReference type="Pfam" id="PF01746">
    <property type="entry name" value="tRNA_m1G_MT"/>
    <property type="match status" value="1"/>
</dbReference>
<dbReference type="PIRSF" id="PIRSF000386">
    <property type="entry name" value="tRNA_mtase"/>
    <property type="match status" value="1"/>
</dbReference>
<dbReference type="SUPFAM" id="SSF75217">
    <property type="entry name" value="alpha/beta knot"/>
    <property type="match status" value="1"/>
</dbReference>